<dbReference type="EMBL" id="AE005674">
    <property type="protein sequence ID" value="AAN43469.2"/>
    <property type="status" value="ALT_INIT"/>
    <property type="molecule type" value="Genomic_DNA"/>
</dbReference>
<dbReference type="EMBL" id="AE014073">
    <property type="protein sequence ID" value="AAP17302.1"/>
    <property type="status" value="ALT_INIT"/>
    <property type="molecule type" value="Genomic_DNA"/>
</dbReference>
<dbReference type="RefSeq" id="WP_001185741.1">
    <property type="nucleotide sequence ID" value="NZ_WPGW01000115.1"/>
</dbReference>
<dbReference type="PDB" id="1TWD">
    <property type="method" value="X-ray"/>
    <property type="resolution" value="1.70 A"/>
    <property type="chains" value="A/B=1-248"/>
</dbReference>
<dbReference type="PDB" id="1X7I">
    <property type="method" value="X-ray"/>
    <property type="resolution" value="1.70 A"/>
    <property type="chains" value="A/B=1-248"/>
</dbReference>
<dbReference type="PDB" id="1X8C">
    <property type="method" value="X-ray"/>
    <property type="resolution" value="2.10 A"/>
    <property type="chains" value="A/B=1-248"/>
</dbReference>
<dbReference type="PDBsum" id="1TWD"/>
<dbReference type="PDBsum" id="1X7I"/>
<dbReference type="PDBsum" id="1X8C"/>
<dbReference type="SMR" id="P67825"/>
<dbReference type="STRING" id="198214.SF1915"/>
<dbReference type="PaxDb" id="198214-SF1915"/>
<dbReference type="GeneID" id="93776175"/>
<dbReference type="KEGG" id="sfx:S2005"/>
<dbReference type="PATRIC" id="fig|623.156.peg.3983"/>
<dbReference type="HOGENOM" id="CLU_1774599_0_0_6"/>
<dbReference type="EvolutionaryTrace" id="P67825"/>
<dbReference type="Proteomes" id="UP000001006">
    <property type="component" value="Chromosome"/>
</dbReference>
<dbReference type="Proteomes" id="UP000002673">
    <property type="component" value="Chromosome"/>
</dbReference>
<dbReference type="GO" id="GO:0005737">
    <property type="term" value="C:cytoplasm"/>
    <property type="evidence" value="ECO:0007669"/>
    <property type="project" value="UniProtKB-SubCell"/>
</dbReference>
<dbReference type="GO" id="GO:0005507">
    <property type="term" value="F:copper ion binding"/>
    <property type="evidence" value="ECO:0007669"/>
    <property type="project" value="TreeGrafter"/>
</dbReference>
<dbReference type="FunFam" id="3.20.20.380:FF:000001">
    <property type="entry name" value="Copper homeostasis protein CutC"/>
    <property type="match status" value="1"/>
</dbReference>
<dbReference type="Gene3D" id="3.20.20.380">
    <property type="entry name" value="Copper homeostasis (CutC) domain"/>
    <property type="match status" value="1"/>
</dbReference>
<dbReference type="HAMAP" id="MF_00795">
    <property type="entry name" value="CutC"/>
    <property type="match status" value="1"/>
</dbReference>
<dbReference type="InterPro" id="IPR005627">
    <property type="entry name" value="CutC-like"/>
</dbReference>
<dbReference type="InterPro" id="IPR036822">
    <property type="entry name" value="CutC-like_dom_sf"/>
</dbReference>
<dbReference type="NCBIfam" id="NF008603">
    <property type="entry name" value="PRK11572.1"/>
    <property type="match status" value="1"/>
</dbReference>
<dbReference type="PANTHER" id="PTHR12598">
    <property type="entry name" value="COPPER HOMEOSTASIS PROTEIN CUTC"/>
    <property type="match status" value="1"/>
</dbReference>
<dbReference type="PANTHER" id="PTHR12598:SF0">
    <property type="entry name" value="COPPER HOMEOSTASIS PROTEIN CUTC HOMOLOG"/>
    <property type="match status" value="1"/>
</dbReference>
<dbReference type="Pfam" id="PF03932">
    <property type="entry name" value="CutC"/>
    <property type="match status" value="1"/>
</dbReference>
<dbReference type="SUPFAM" id="SSF110395">
    <property type="entry name" value="CutC-like"/>
    <property type="match status" value="1"/>
</dbReference>
<accession>P67825</accession>
<accession>P46719</accession>
<accession>P76294</accession>
<organism>
    <name type="scientific">Shigella flexneri</name>
    <dbReference type="NCBI Taxonomy" id="623"/>
    <lineage>
        <taxon>Bacteria</taxon>
        <taxon>Pseudomonadati</taxon>
        <taxon>Pseudomonadota</taxon>
        <taxon>Gammaproteobacteria</taxon>
        <taxon>Enterobacterales</taxon>
        <taxon>Enterobacteriaceae</taxon>
        <taxon>Shigella</taxon>
    </lineage>
</organism>
<keyword id="KW-0002">3D-structure</keyword>
<keyword id="KW-0963">Cytoplasm</keyword>
<keyword id="KW-1185">Reference proteome</keyword>
<sequence>MALLEICCYSMECALTAQQNGADRVELCAAPKEGGLTPSLGVLKSVRQRVTIPVHPIIRPRGGDFCYSDGEFAAILEDVRTVRELGFPGLVTGVLDVDGNVDMPRMEKIMAAAGPLAVTFHRAFDMCANPLYTLNNLAELGIARVLTSGQKSDALQGLSKIMELIAHRDAPIIMAGAGVRAENLHHFLDAGVLEVHSSAGAWQASPMRYRNQGLSMSSDEHADEYSRYIVDGAAVAEMKGIIERHQAK</sequence>
<reference key="1">
    <citation type="journal article" date="2002" name="Nucleic Acids Res.">
        <title>Genome sequence of Shigella flexneri 2a: insights into pathogenicity through comparison with genomes of Escherichia coli K12 and O157.</title>
        <authorList>
            <person name="Jin Q."/>
            <person name="Yuan Z."/>
            <person name="Xu J."/>
            <person name="Wang Y."/>
            <person name="Shen Y."/>
            <person name="Lu W."/>
            <person name="Wang J."/>
            <person name="Liu H."/>
            <person name="Yang J."/>
            <person name="Yang F."/>
            <person name="Zhang X."/>
            <person name="Zhang J."/>
            <person name="Yang G."/>
            <person name="Wu H."/>
            <person name="Qu D."/>
            <person name="Dong J."/>
            <person name="Sun L."/>
            <person name="Xue Y."/>
            <person name="Zhao A."/>
            <person name="Gao Y."/>
            <person name="Zhu J."/>
            <person name="Kan B."/>
            <person name="Ding K."/>
            <person name="Chen S."/>
            <person name="Cheng H."/>
            <person name="Yao Z."/>
            <person name="He B."/>
            <person name="Chen R."/>
            <person name="Ma D."/>
            <person name="Qiang B."/>
            <person name="Wen Y."/>
            <person name="Hou Y."/>
            <person name="Yu J."/>
        </authorList>
    </citation>
    <scope>NUCLEOTIDE SEQUENCE [LARGE SCALE GENOMIC DNA]</scope>
    <source>
        <strain>301 / Serotype 2a</strain>
    </source>
</reference>
<reference key="2">
    <citation type="journal article" date="2003" name="Infect. Immun.">
        <title>Complete genome sequence and comparative genomics of Shigella flexneri serotype 2a strain 2457T.</title>
        <authorList>
            <person name="Wei J."/>
            <person name="Goldberg M.B."/>
            <person name="Burland V."/>
            <person name="Venkatesan M.M."/>
            <person name="Deng W."/>
            <person name="Fournier G."/>
            <person name="Mayhew G.F."/>
            <person name="Plunkett G. III"/>
            <person name="Rose D.J."/>
            <person name="Darling A."/>
            <person name="Mau B."/>
            <person name="Perna N.T."/>
            <person name="Payne S.M."/>
            <person name="Runyen-Janecky L.J."/>
            <person name="Zhou S."/>
            <person name="Schwartz D.C."/>
            <person name="Blattner F.R."/>
        </authorList>
    </citation>
    <scope>NUCLEOTIDE SEQUENCE [LARGE SCALE GENOMIC DNA]</scope>
    <source>
        <strain>ATCC 700930 / 2457T / Serotype 2a</strain>
    </source>
</reference>
<reference evidence="5" key="3">
    <citation type="submission" date="2004-06" db="PDB data bank">
        <title>Crystal Structure of the Putative Copper Homeostasis Protein (CutC) from Shigella flexneri, Northeast Structural Genomics Target SfR33.</title>
        <authorList>
            <person name="Forouhar F."/>
            <person name="Lee I."/>
            <person name="Vorobiev S.M."/>
            <person name="Ma L.-C."/>
            <person name="Shastry R."/>
            <person name="Conover K."/>
            <person name="Xiao R."/>
            <person name="Acton T.B."/>
            <person name="Montelione G.T."/>
            <person name="Tong L."/>
            <person name="Hunt J.F."/>
        </authorList>
    </citation>
    <scope>X-RAY CRYSTALLOGRAPHY (1.70 ANGSTROMS)</scope>
    <source>
        <strain>301 / Serotype 2a</strain>
    </source>
</reference>
<reference evidence="6 7" key="4">
    <citation type="journal article" date="2005" name="Proteins">
        <title>Crystal structure of the copper homeostasis protein (CutCm) from Shigella flexneri at 1.7 A resolution: the first structure of a new sequence family of TIM barrels.</title>
        <authorList>
            <person name="Zhu D.Y."/>
            <person name="Zhu Y.Q."/>
            <person name="Huang R.H."/>
            <person name="Xiang Y."/>
            <person name="Yang N."/>
            <person name="Lu H.X."/>
            <person name="Li G.P."/>
            <person name="Jin Q."/>
            <person name="Wang D.C."/>
        </authorList>
    </citation>
    <scope>X-RAY CRYSTALLOGRAPHY (1.70 ANGSTROMS)</scope>
    <scope>SUBUNIT</scope>
</reference>
<comment type="subunit">
    <text evidence="1 4">Homodimer.</text>
</comment>
<comment type="subcellular location">
    <subcellularLocation>
        <location evidence="1">Cytoplasm</location>
    </subcellularLocation>
</comment>
<comment type="similarity">
    <text evidence="1">Belongs to the CutC family.</text>
</comment>
<comment type="caution">
    <text evidence="1">Once thought to be involved in copper homeostasis, experiments in E.coli have shown this is not the case.</text>
</comment>
<comment type="sequence caution" evidence="3">
    <conflict type="erroneous initiation">
        <sequence resource="EMBL-CDS" id="AAN43469"/>
    </conflict>
    <text>Truncated N-terminus.</text>
</comment>
<comment type="sequence caution" evidence="3">
    <conflict type="erroneous initiation">
        <sequence resource="EMBL-CDS" id="AAP17302"/>
    </conflict>
    <text>Truncated N-terminus.</text>
</comment>
<evidence type="ECO:0000255" key="1">
    <source>
        <dbReference type="HAMAP-Rule" id="MF_00795"/>
    </source>
</evidence>
<evidence type="ECO:0000303" key="2">
    <source>
    </source>
</evidence>
<evidence type="ECO:0000305" key="3"/>
<evidence type="ECO:0000305" key="4">
    <source>
    </source>
</evidence>
<evidence type="ECO:0007744" key="5">
    <source>
        <dbReference type="PDB" id="1TWD"/>
    </source>
</evidence>
<evidence type="ECO:0007744" key="6">
    <source>
        <dbReference type="PDB" id="1X7I"/>
    </source>
</evidence>
<evidence type="ECO:0007744" key="7">
    <source>
        <dbReference type="PDB" id="1X8C"/>
    </source>
</evidence>
<evidence type="ECO:0007829" key="8">
    <source>
        <dbReference type="PDB" id="1TWD"/>
    </source>
</evidence>
<name>CUTC_SHIFL</name>
<proteinExistence type="evidence at protein level"/>
<gene>
    <name evidence="1" type="primary">cutC</name>
    <name evidence="2" type="synonym">cutCm</name>
    <name type="ordered locus">SF1915</name>
    <name type="ordered locus">S2005</name>
</gene>
<protein>
    <recommendedName>
        <fullName evidence="1">PF03932 family protein CutC</fullName>
    </recommendedName>
</protein>
<feature type="chain" id="PRO_0000215076" description="PF03932 family protein CutC">
    <location>
        <begin position="1"/>
        <end position="248"/>
    </location>
</feature>
<feature type="strand" evidence="8">
    <location>
        <begin position="3"/>
        <end position="10"/>
    </location>
</feature>
<feature type="helix" evidence="8">
    <location>
        <begin position="11"/>
        <end position="19"/>
    </location>
</feature>
<feature type="strand" evidence="8">
    <location>
        <begin position="23"/>
        <end position="27"/>
    </location>
</feature>
<feature type="helix" evidence="8">
    <location>
        <begin position="31"/>
        <end position="33"/>
    </location>
</feature>
<feature type="helix" evidence="8">
    <location>
        <begin position="40"/>
        <end position="49"/>
    </location>
</feature>
<feature type="strand" evidence="8">
    <location>
        <begin position="54"/>
        <end position="57"/>
    </location>
</feature>
<feature type="strand" evidence="8">
    <location>
        <begin position="60"/>
        <end position="63"/>
    </location>
</feature>
<feature type="helix" evidence="8">
    <location>
        <begin position="69"/>
        <end position="84"/>
    </location>
</feature>
<feature type="strand" evidence="8">
    <location>
        <begin position="88"/>
        <end position="92"/>
    </location>
</feature>
<feature type="strand" evidence="8">
    <location>
        <begin position="99"/>
        <end position="101"/>
    </location>
</feature>
<feature type="helix" evidence="8">
    <location>
        <begin position="103"/>
        <end position="113"/>
    </location>
</feature>
<feature type="strand" evidence="8">
    <location>
        <begin position="116"/>
        <end position="120"/>
    </location>
</feature>
<feature type="helix" evidence="8">
    <location>
        <begin position="122"/>
        <end position="126"/>
    </location>
</feature>
<feature type="helix" evidence="8">
    <location>
        <begin position="130"/>
        <end position="140"/>
    </location>
</feature>
<feature type="strand" evidence="8">
    <location>
        <begin position="144"/>
        <end position="147"/>
    </location>
</feature>
<feature type="strand" evidence="8">
    <location>
        <begin position="151"/>
        <end position="153"/>
    </location>
</feature>
<feature type="turn" evidence="8">
    <location>
        <begin position="154"/>
        <end position="157"/>
    </location>
</feature>
<feature type="helix" evidence="8">
    <location>
        <begin position="158"/>
        <end position="165"/>
    </location>
</feature>
<feature type="strand" evidence="8">
    <location>
        <begin position="167"/>
        <end position="169"/>
    </location>
</feature>
<feature type="strand" evidence="8">
    <location>
        <begin position="172"/>
        <end position="178"/>
    </location>
</feature>
<feature type="turn" evidence="8">
    <location>
        <begin position="181"/>
        <end position="183"/>
    </location>
</feature>
<feature type="helix" evidence="8">
    <location>
        <begin position="184"/>
        <end position="190"/>
    </location>
</feature>
<feature type="strand" evidence="8">
    <location>
        <begin position="193"/>
        <end position="197"/>
    </location>
</feature>
<feature type="strand" evidence="8">
    <location>
        <begin position="200"/>
        <end position="203"/>
    </location>
</feature>
<feature type="strand" evidence="8">
    <location>
        <begin position="227"/>
        <end position="230"/>
    </location>
</feature>
<feature type="helix" evidence="8">
    <location>
        <begin position="232"/>
        <end position="247"/>
    </location>
</feature>